<proteinExistence type="inferred from homology"/>
<keyword id="KW-1003">Cell membrane</keyword>
<keyword id="KW-0472">Membrane</keyword>
<keyword id="KW-0812">Transmembrane</keyword>
<keyword id="KW-1133">Transmembrane helix</keyword>
<accession>Q99T32</accession>
<evidence type="ECO:0000250" key="1"/>
<evidence type="ECO:0000255" key="2"/>
<evidence type="ECO:0000305" key="3"/>
<dbReference type="EMBL" id="BA000017">
    <property type="protein sequence ID" value="BAB58008.1"/>
    <property type="molecule type" value="Genomic_DNA"/>
</dbReference>
<dbReference type="RefSeq" id="WP_000992518.1">
    <property type="nucleotide sequence ID" value="NC_002758.2"/>
</dbReference>
<dbReference type="SMR" id="Q99T32"/>
<dbReference type="KEGG" id="sav:SAV1846"/>
<dbReference type="HOGENOM" id="CLU_042384_0_0_9"/>
<dbReference type="PhylomeDB" id="Q99T32"/>
<dbReference type="Proteomes" id="UP000002481">
    <property type="component" value="Chromosome"/>
</dbReference>
<dbReference type="GO" id="GO:0005886">
    <property type="term" value="C:plasma membrane"/>
    <property type="evidence" value="ECO:0007669"/>
    <property type="project" value="UniProtKB-SubCell"/>
</dbReference>
<dbReference type="InterPro" id="IPR007383">
    <property type="entry name" value="DUF445"/>
</dbReference>
<dbReference type="InterPro" id="IPR016991">
    <property type="entry name" value="UCP032178"/>
</dbReference>
<dbReference type="PANTHER" id="PTHR35791">
    <property type="entry name" value="UPF0754 MEMBRANE PROTEIN YHEB"/>
    <property type="match status" value="1"/>
</dbReference>
<dbReference type="PANTHER" id="PTHR35791:SF1">
    <property type="entry name" value="UPF0754 MEMBRANE PROTEIN YHEB"/>
    <property type="match status" value="1"/>
</dbReference>
<dbReference type="Pfam" id="PF04286">
    <property type="entry name" value="DUF445"/>
    <property type="match status" value="1"/>
</dbReference>
<dbReference type="PIRSF" id="PIRSF032178">
    <property type="entry name" value="UCP032178"/>
    <property type="match status" value="1"/>
</dbReference>
<comment type="subcellular location">
    <subcellularLocation>
        <location evidence="1">Cell membrane</location>
        <topology evidence="1">Multi-pass membrane protein</topology>
    </subcellularLocation>
</comment>
<comment type="similarity">
    <text evidence="3">Belongs to the UPF0754 family.</text>
</comment>
<protein>
    <recommendedName>
        <fullName>UPF0754 membrane protein SAV1846</fullName>
    </recommendedName>
</protein>
<organism>
    <name type="scientific">Staphylococcus aureus (strain Mu50 / ATCC 700699)</name>
    <dbReference type="NCBI Taxonomy" id="158878"/>
    <lineage>
        <taxon>Bacteria</taxon>
        <taxon>Bacillati</taxon>
        <taxon>Bacillota</taxon>
        <taxon>Bacilli</taxon>
        <taxon>Bacillales</taxon>
        <taxon>Staphylococcaceae</taxon>
        <taxon>Staphylococcus</taxon>
    </lineage>
</organism>
<name>Y1846_STAAM</name>
<feature type="chain" id="PRO_0000388311" description="UPF0754 membrane protein SAV1846">
    <location>
        <begin position="1"/>
        <end position="374"/>
    </location>
</feature>
<feature type="transmembrane region" description="Helical" evidence="2">
    <location>
        <begin position="4"/>
        <end position="24"/>
    </location>
</feature>
<feature type="transmembrane region" description="Helical" evidence="2">
    <location>
        <begin position="354"/>
        <end position="374"/>
    </location>
</feature>
<sequence>MNALFIIIFMIVVGAIIGGITNVIAIRMLFHPFKPYYIFKFRVPFTPGLIPKRREEIATKIGQVIEEHLLTETLINEKLKSEQSQQAIESMIQQQLQKLTKDQLSIKQITSQIDIDLEQVLQTNGNQYIESQLNNYYTKHQNQTIASLLPNQLVTFLDQHVDNATDLLCDRARNYLSSAKGTQDINDMLDTFFHEKGKLIGMLQMFMTKESIADRIQQELIRLTSHPKARTIVTSLITNEYQTFKDKPLNELLDASQFNEIAENLSVYVTTYASNQANKPVVTLMPQFVDYLEGQLSSKLANLIIEKLSIHLSTIMKKVDLRGLIEEQINTFDLDYIEKLIIEIANKELKLIMSLGFILGGIIGFFQGLVAIFV</sequence>
<gene>
    <name type="ordered locus">SAV1846</name>
</gene>
<reference key="1">
    <citation type="journal article" date="2001" name="Lancet">
        <title>Whole genome sequencing of meticillin-resistant Staphylococcus aureus.</title>
        <authorList>
            <person name="Kuroda M."/>
            <person name="Ohta T."/>
            <person name="Uchiyama I."/>
            <person name="Baba T."/>
            <person name="Yuzawa H."/>
            <person name="Kobayashi I."/>
            <person name="Cui L."/>
            <person name="Oguchi A."/>
            <person name="Aoki K."/>
            <person name="Nagai Y."/>
            <person name="Lian J.-Q."/>
            <person name="Ito T."/>
            <person name="Kanamori M."/>
            <person name="Matsumaru H."/>
            <person name="Maruyama A."/>
            <person name="Murakami H."/>
            <person name="Hosoyama A."/>
            <person name="Mizutani-Ui Y."/>
            <person name="Takahashi N.K."/>
            <person name="Sawano T."/>
            <person name="Inoue R."/>
            <person name="Kaito C."/>
            <person name="Sekimizu K."/>
            <person name="Hirakawa H."/>
            <person name="Kuhara S."/>
            <person name="Goto S."/>
            <person name="Yabuzaki J."/>
            <person name="Kanehisa M."/>
            <person name="Yamashita A."/>
            <person name="Oshima K."/>
            <person name="Furuya K."/>
            <person name="Yoshino C."/>
            <person name="Shiba T."/>
            <person name="Hattori M."/>
            <person name="Ogasawara N."/>
            <person name="Hayashi H."/>
            <person name="Hiramatsu K."/>
        </authorList>
    </citation>
    <scope>NUCLEOTIDE SEQUENCE [LARGE SCALE GENOMIC DNA]</scope>
    <source>
        <strain>Mu50 / ATCC 700699</strain>
    </source>
</reference>